<name>CIB3_MOUSE</name>
<feature type="chain" id="PRO_0000425745" description="Calcium and integrin-binding family member 3">
    <location>
        <begin position="1"/>
        <end position="160"/>
    </location>
</feature>
<feature type="domain" description="EF-hand 1" evidence="3">
    <location>
        <begin position="39"/>
        <end position="74"/>
    </location>
</feature>
<feature type="domain" description="EF-hand 2" evidence="3">
    <location>
        <begin position="76"/>
        <end position="111"/>
    </location>
</feature>
<feature type="domain" description="EF-hand 3" evidence="3">
    <location>
        <begin position="117"/>
        <end position="152"/>
    </location>
</feature>
<feature type="binding site" evidence="3">
    <location>
        <position position="89"/>
    </location>
    <ligand>
        <name>Ca(2+)</name>
        <dbReference type="ChEBI" id="CHEBI:29108"/>
        <label>1</label>
    </ligand>
</feature>
<feature type="binding site" evidence="3">
    <location>
        <position position="91"/>
    </location>
    <ligand>
        <name>Ca(2+)</name>
        <dbReference type="ChEBI" id="CHEBI:29108"/>
        <label>1</label>
    </ligand>
</feature>
<feature type="binding site" evidence="3">
    <location>
        <position position="93"/>
    </location>
    <ligand>
        <name>Ca(2+)</name>
        <dbReference type="ChEBI" id="CHEBI:29108"/>
        <label>1</label>
    </ligand>
</feature>
<feature type="binding site" evidence="3">
    <location>
        <position position="95"/>
    </location>
    <ligand>
        <name>Ca(2+)</name>
        <dbReference type="ChEBI" id="CHEBI:29108"/>
        <label>1</label>
    </ligand>
</feature>
<feature type="binding site" evidence="3">
    <location>
        <position position="100"/>
    </location>
    <ligand>
        <name>Ca(2+)</name>
        <dbReference type="ChEBI" id="CHEBI:29108"/>
        <label>1</label>
    </ligand>
</feature>
<feature type="binding site" evidence="3">
    <location>
        <position position="130"/>
    </location>
    <ligand>
        <name>Ca(2+)</name>
        <dbReference type="ChEBI" id="CHEBI:29108"/>
        <label>2</label>
    </ligand>
</feature>
<feature type="binding site" evidence="3">
    <location>
        <position position="132"/>
    </location>
    <ligand>
        <name>Ca(2+)</name>
        <dbReference type="ChEBI" id="CHEBI:29108"/>
        <label>2</label>
    </ligand>
</feature>
<feature type="binding site" evidence="3">
    <location>
        <position position="134"/>
    </location>
    <ligand>
        <name>Ca(2+)</name>
        <dbReference type="ChEBI" id="CHEBI:29108"/>
        <label>2</label>
    </ligand>
</feature>
<feature type="binding site" evidence="3">
    <location>
        <position position="136"/>
    </location>
    <ligand>
        <name>Ca(2+)</name>
        <dbReference type="ChEBI" id="CHEBI:29108"/>
        <label>2</label>
    </ligand>
</feature>
<feature type="binding site" evidence="3">
    <location>
        <position position="141"/>
    </location>
    <ligand>
        <name>Ca(2+)</name>
        <dbReference type="ChEBI" id="CHEBI:29108"/>
        <label>2</label>
    </ligand>
</feature>
<dbReference type="EMBL" id="AC158898">
    <property type="status" value="NOT_ANNOTATED_CDS"/>
    <property type="molecule type" value="Genomic_DNA"/>
</dbReference>
<dbReference type="EMBL" id="BC120812">
    <property type="protein sequence ID" value="AAI20813.1"/>
    <property type="molecule type" value="mRNA"/>
</dbReference>
<dbReference type="EMBL" id="BC120814">
    <property type="protein sequence ID" value="AAI20815.1"/>
    <property type="molecule type" value="mRNA"/>
</dbReference>
<dbReference type="CCDS" id="CCDS52594.1"/>
<dbReference type="RefSeq" id="NP_001074281.1">
    <property type="nucleotide sequence ID" value="NM_001080812.2"/>
</dbReference>
<dbReference type="SMR" id="Q0P523"/>
<dbReference type="FunCoup" id="Q0P523">
    <property type="interactions" value="32"/>
</dbReference>
<dbReference type="STRING" id="10090.ENSMUSP00000096231"/>
<dbReference type="PhosphoSitePlus" id="Q0P523"/>
<dbReference type="PaxDb" id="10090-ENSMUSP00000096231"/>
<dbReference type="Antibodypedia" id="43661">
    <property type="antibodies" value="131 antibodies from 23 providers"/>
</dbReference>
<dbReference type="Ensembl" id="ENSMUST00000098630.5">
    <property type="protein sequence ID" value="ENSMUSP00000096231.4"/>
    <property type="gene ID" value="ENSMUSG00000074240.6"/>
</dbReference>
<dbReference type="GeneID" id="234421"/>
<dbReference type="KEGG" id="mmu:234421"/>
<dbReference type="UCSC" id="uc009mfm.1">
    <property type="organism name" value="mouse"/>
</dbReference>
<dbReference type="AGR" id="MGI:2685953"/>
<dbReference type="CTD" id="117286"/>
<dbReference type="MGI" id="MGI:2685953">
    <property type="gene designation" value="Cib3"/>
</dbReference>
<dbReference type="VEuPathDB" id="HostDB:ENSMUSG00000074240"/>
<dbReference type="eggNOG" id="KOG0038">
    <property type="taxonomic scope" value="Eukaryota"/>
</dbReference>
<dbReference type="GeneTree" id="ENSGT00940000160466"/>
<dbReference type="HOGENOM" id="CLU_061288_6_0_1"/>
<dbReference type="InParanoid" id="Q0P523"/>
<dbReference type="PhylomeDB" id="Q0P523"/>
<dbReference type="TreeFam" id="TF313865"/>
<dbReference type="BioGRID-ORCS" id="234421">
    <property type="hits" value="2 hits in 78 CRISPR screens"/>
</dbReference>
<dbReference type="PRO" id="PR:Q0P523"/>
<dbReference type="Proteomes" id="UP000000589">
    <property type="component" value="Chromosome 8"/>
</dbReference>
<dbReference type="RNAct" id="Q0P523">
    <property type="molecule type" value="protein"/>
</dbReference>
<dbReference type="Bgee" id="ENSMUSG00000074240">
    <property type="expression patterns" value="Expressed in otolith organ and 23 other cell types or tissues"/>
</dbReference>
<dbReference type="ExpressionAtlas" id="Q0P523">
    <property type="expression patterns" value="baseline and differential"/>
</dbReference>
<dbReference type="GO" id="GO:0005509">
    <property type="term" value="F:calcium ion binding"/>
    <property type="evidence" value="ECO:0000250"/>
    <property type="project" value="UniProtKB"/>
</dbReference>
<dbReference type="GO" id="GO:0000287">
    <property type="term" value="F:magnesium ion binding"/>
    <property type="evidence" value="ECO:0000250"/>
    <property type="project" value="UniProtKB"/>
</dbReference>
<dbReference type="CDD" id="cd00051">
    <property type="entry name" value="EFh"/>
    <property type="match status" value="1"/>
</dbReference>
<dbReference type="FunFam" id="1.10.238.10:FF:000035">
    <property type="entry name" value="Calcium and integrin-binding family member 2"/>
    <property type="match status" value="1"/>
</dbReference>
<dbReference type="Gene3D" id="1.10.238.10">
    <property type="entry name" value="EF-hand"/>
    <property type="match status" value="2"/>
</dbReference>
<dbReference type="InterPro" id="IPR051433">
    <property type="entry name" value="CIBP"/>
</dbReference>
<dbReference type="InterPro" id="IPR011992">
    <property type="entry name" value="EF-hand-dom_pair"/>
</dbReference>
<dbReference type="InterPro" id="IPR018247">
    <property type="entry name" value="EF_Hand_1_Ca_BS"/>
</dbReference>
<dbReference type="InterPro" id="IPR002048">
    <property type="entry name" value="EF_hand_dom"/>
</dbReference>
<dbReference type="PANTHER" id="PTHR45791">
    <property type="entry name" value="CALCIUM AND INTEGRIN BINDING FAMILY MEMBER 2"/>
    <property type="match status" value="1"/>
</dbReference>
<dbReference type="PANTHER" id="PTHR45791:SF7">
    <property type="entry name" value="CALCIUM AND INTEGRIN-BINDING FAMILY MEMBER 3"/>
    <property type="match status" value="1"/>
</dbReference>
<dbReference type="Pfam" id="PF13499">
    <property type="entry name" value="EF-hand_7"/>
    <property type="match status" value="1"/>
</dbReference>
<dbReference type="SUPFAM" id="SSF47473">
    <property type="entry name" value="EF-hand"/>
    <property type="match status" value="1"/>
</dbReference>
<dbReference type="PROSITE" id="PS00018">
    <property type="entry name" value="EF_HAND_1"/>
    <property type="match status" value="2"/>
</dbReference>
<dbReference type="PROSITE" id="PS50222">
    <property type="entry name" value="EF_HAND_2"/>
    <property type="match status" value="3"/>
</dbReference>
<comment type="function">
    <text evidence="6">Acts as an auxiliary subunit of the sensory mechanoelectrical transduction (MET) channel in hair cells (PubMed:34089643). Plays a role in regulating hair cell MET channel localization and function (PubMed:34089643).</text>
</comment>
<comment type="subunit">
    <text evidence="2 4 6">Monomer and homodimer (By similarity). Interacts with ITGA2B (via C-terminus cytoplasmic tail region); the interaction is stabilized/increased in a calcium and magnesium-dependent manner (PubMed:18989529). Interacts with TMC1 (PubMed:34089643).</text>
</comment>
<comment type="tissue specificity">
    <text evidence="4 5">Expressed in heart, liver and inner ear (PubMed:29255404). In the inner ear, expressed in vestibule and basilar membrane cells (PubMed:29255404). Expressed in megakaryocytes and endothelial cells.</text>
</comment>
<comment type="miscellaneous">
    <text evidence="1">The binding of either calcium or magnesium significantly increases the structural stability of the protein in comparison to apo-CIB (calcium- and magnesium-free form).</text>
</comment>
<proteinExistence type="evidence at protein level"/>
<accession>Q0P523</accession>
<gene>
    <name type="primary">Cib3</name>
</gene>
<reference key="1">
    <citation type="journal article" date="2009" name="PLoS Biol.">
        <title>Lineage-specific biology revealed by a finished genome assembly of the mouse.</title>
        <authorList>
            <person name="Church D.M."/>
            <person name="Goodstadt L."/>
            <person name="Hillier L.W."/>
            <person name="Zody M.C."/>
            <person name="Goldstein S."/>
            <person name="She X."/>
            <person name="Bult C.J."/>
            <person name="Agarwala R."/>
            <person name="Cherry J.L."/>
            <person name="DiCuccio M."/>
            <person name="Hlavina W."/>
            <person name="Kapustin Y."/>
            <person name="Meric P."/>
            <person name="Maglott D."/>
            <person name="Birtle Z."/>
            <person name="Marques A.C."/>
            <person name="Graves T."/>
            <person name="Zhou S."/>
            <person name="Teague B."/>
            <person name="Potamousis K."/>
            <person name="Churas C."/>
            <person name="Place M."/>
            <person name="Herschleb J."/>
            <person name="Runnheim R."/>
            <person name="Forrest D."/>
            <person name="Amos-Landgraf J."/>
            <person name="Schwartz D.C."/>
            <person name="Cheng Z."/>
            <person name="Lindblad-Toh K."/>
            <person name="Eichler E.E."/>
            <person name="Ponting C.P."/>
        </authorList>
    </citation>
    <scope>NUCLEOTIDE SEQUENCE [LARGE SCALE GENOMIC DNA]</scope>
    <source>
        <strain>C57BL/6J</strain>
    </source>
</reference>
<reference key="2">
    <citation type="journal article" date="2004" name="Genome Res.">
        <title>The status, quality, and expansion of the NIH full-length cDNA project: the Mammalian Gene Collection (MGC).</title>
        <authorList>
            <consortium name="The MGC Project Team"/>
        </authorList>
    </citation>
    <scope>NUCLEOTIDE SEQUENCE [LARGE SCALE MRNA]</scope>
</reference>
<reference key="3">
    <citation type="journal article" date="2008" name="Thromb. Haemost.">
        <title>Characterization of calcium- and integrin-binding protein 1 (CIB1) knockout platelets: potential compensation by CIB family members.</title>
        <authorList>
            <person name="Denofrio J.C."/>
            <person name="Yuan W."/>
            <person name="Temple B.R."/>
            <person name="Gentry H.R."/>
            <person name="Parise L.V."/>
        </authorList>
    </citation>
    <scope>INTERACTION WITH ITGA2B</scope>
    <scope>TISSUE SPECIFICITY</scope>
</reference>
<reference key="4">
    <citation type="journal article" date="2017" name="Front. Mol. Neurosci.">
        <title>Loss of CIB2 Causes Profound Hearing Loss and Abolishes Mechanoelectrical Transduction in Mice.</title>
        <authorList>
            <person name="Wang Y."/>
            <person name="Li J."/>
            <person name="Yao X."/>
            <person name="Li W."/>
            <person name="Du H."/>
            <person name="Tang M."/>
            <person name="Xiong W."/>
            <person name="Chai R."/>
            <person name="Xu Z."/>
        </authorList>
    </citation>
    <scope>TISSUE SPECIFICITY</scope>
</reference>
<reference key="5">
    <citation type="journal article" date="2021" name="Neuron">
        <title>CIB2 and CIB3 are auxiliary subunits of the mechanotransduction channel of hair cells.</title>
        <authorList>
            <person name="Liang X."/>
            <person name="Qiu X."/>
            <person name="Dionne G."/>
            <person name="Cunningham C.L."/>
            <person name="Pucak M.L."/>
            <person name="Peng G."/>
            <person name="Kim Y.H."/>
            <person name="Lauer A."/>
            <person name="Shapiro L."/>
            <person name="Mueller U."/>
        </authorList>
    </citation>
    <scope>FUNCTION</scope>
    <scope>INTERACTION WITH TMC1</scope>
</reference>
<protein>
    <recommendedName>
        <fullName>Calcium and integrin-binding family member 3</fullName>
    </recommendedName>
</protein>
<keyword id="KW-0106">Calcium</keyword>
<keyword id="KW-0460">Magnesium</keyword>
<keyword id="KW-0479">Metal-binding</keyword>
<keyword id="KW-1185">Reference proteome</keyword>
<keyword id="KW-0677">Repeat</keyword>
<evidence type="ECO:0000250" key="1"/>
<evidence type="ECO:0000250" key="2">
    <source>
        <dbReference type="UniProtKB" id="Q96Q77"/>
    </source>
</evidence>
<evidence type="ECO:0000255" key="3">
    <source>
        <dbReference type="PROSITE-ProRule" id="PRU00448"/>
    </source>
</evidence>
<evidence type="ECO:0000269" key="4">
    <source>
    </source>
</evidence>
<evidence type="ECO:0000269" key="5">
    <source>
    </source>
</evidence>
<evidence type="ECO:0000269" key="6">
    <source>
    </source>
</evidence>
<sequence length="160" mass="18668">MRLFYRYQDLAPQLVPLDYTTSPKVKVPYELIGSMPELKDNPFRQRIAQVFSQDGDGHMTLENFLDMFSVMSEMAPRDLKAYYAFKIYDFNNDNYICAWDLEQTVTRLTRGELSAEEVTLVCEKVLDEADGDQDGRLSLEDFQNMILRAPDFLSTFHIRI</sequence>
<organism>
    <name type="scientific">Mus musculus</name>
    <name type="common">Mouse</name>
    <dbReference type="NCBI Taxonomy" id="10090"/>
    <lineage>
        <taxon>Eukaryota</taxon>
        <taxon>Metazoa</taxon>
        <taxon>Chordata</taxon>
        <taxon>Craniata</taxon>
        <taxon>Vertebrata</taxon>
        <taxon>Euteleostomi</taxon>
        <taxon>Mammalia</taxon>
        <taxon>Eutheria</taxon>
        <taxon>Euarchontoglires</taxon>
        <taxon>Glires</taxon>
        <taxon>Rodentia</taxon>
        <taxon>Myomorpha</taxon>
        <taxon>Muroidea</taxon>
        <taxon>Muridae</taxon>
        <taxon>Murinae</taxon>
        <taxon>Mus</taxon>
        <taxon>Mus</taxon>
    </lineage>
</organism>